<evidence type="ECO:0000255" key="1">
    <source>
        <dbReference type="HAMAP-Rule" id="MF_00041"/>
    </source>
</evidence>
<comment type="catalytic activity">
    <reaction evidence="1">
        <text>tRNA(Cys) + L-cysteine + ATP = L-cysteinyl-tRNA(Cys) + AMP + diphosphate</text>
        <dbReference type="Rhea" id="RHEA:17773"/>
        <dbReference type="Rhea" id="RHEA-COMP:9661"/>
        <dbReference type="Rhea" id="RHEA-COMP:9679"/>
        <dbReference type="ChEBI" id="CHEBI:30616"/>
        <dbReference type="ChEBI" id="CHEBI:33019"/>
        <dbReference type="ChEBI" id="CHEBI:35235"/>
        <dbReference type="ChEBI" id="CHEBI:78442"/>
        <dbReference type="ChEBI" id="CHEBI:78517"/>
        <dbReference type="ChEBI" id="CHEBI:456215"/>
        <dbReference type="EC" id="6.1.1.16"/>
    </reaction>
</comment>
<comment type="cofactor">
    <cofactor evidence="1">
        <name>Zn(2+)</name>
        <dbReference type="ChEBI" id="CHEBI:29105"/>
    </cofactor>
    <text evidence="1">Binds 1 zinc ion per subunit.</text>
</comment>
<comment type="subunit">
    <text evidence="1">Monomer.</text>
</comment>
<comment type="subcellular location">
    <subcellularLocation>
        <location evidence="1">Cytoplasm</location>
    </subcellularLocation>
</comment>
<comment type="similarity">
    <text evidence="1">Belongs to the class-I aminoacyl-tRNA synthetase family.</text>
</comment>
<sequence length="438" mass="52036">MLQIYNSLTRKKEFFKPDHPPQINIYVCGPTVYNHLHLGNTRPLIFFDTVKRYLEMLKFKVYYVVNITDIDDKIIETSLKNQVLEKDLANKYIKSFNNLLETLNIQTINFKPQATQYINSMILYIQTLLDQGFAYFTDQGIYFRVSKITDYGKLKKQDLSQLKQNVRKQLDPQKEFPGDFILWKKTSQGITYPSPWFAGRPGWHTECATMIEQLFKLPLDIHGGGTDLKFPHHENEIAQTHAHSHQKLANFFMHVERLDYQNQKMSKSLGNIIWCKDLLKQYNPCIIKFLILSTHYRKPINFSYDLMEQTQQKYKKITYFLTKNNFYLKVNHFFCQTLDQDIMQLFHQLMQDDFATHKVIDLMEQIIKRAHQTQILDKLSQFQNSLLLILNTLVIAIPFNKPTKKDLQTYFLWQDARKCRDFIQADILRKQLLDKGFI</sequence>
<feature type="chain" id="PRO_0000240889" description="Cysteine--tRNA ligase">
    <location>
        <begin position="1"/>
        <end position="438"/>
    </location>
</feature>
<feature type="short sequence motif" description="'HIGH' region">
    <location>
        <begin position="30"/>
        <end position="40"/>
    </location>
</feature>
<feature type="short sequence motif" description="'KMSKS' region">
    <location>
        <begin position="264"/>
        <end position="268"/>
    </location>
</feature>
<feature type="binding site" evidence="1">
    <location>
        <position position="28"/>
    </location>
    <ligand>
        <name>Zn(2+)</name>
        <dbReference type="ChEBI" id="CHEBI:29105"/>
    </ligand>
</feature>
<feature type="binding site" evidence="1">
    <location>
        <position position="207"/>
    </location>
    <ligand>
        <name>Zn(2+)</name>
        <dbReference type="ChEBI" id="CHEBI:29105"/>
    </ligand>
</feature>
<feature type="binding site" evidence="1">
    <location>
        <position position="232"/>
    </location>
    <ligand>
        <name>Zn(2+)</name>
        <dbReference type="ChEBI" id="CHEBI:29105"/>
    </ligand>
</feature>
<feature type="binding site" evidence="1">
    <location>
        <position position="236"/>
    </location>
    <ligand>
        <name>Zn(2+)</name>
        <dbReference type="ChEBI" id="CHEBI:29105"/>
    </ligand>
</feature>
<feature type="binding site" evidence="1">
    <location>
        <position position="267"/>
    </location>
    <ligand>
        <name>ATP</name>
        <dbReference type="ChEBI" id="CHEBI:30616"/>
    </ligand>
</feature>
<dbReference type="EC" id="6.1.1.16" evidence="1"/>
<dbReference type="EMBL" id="CP000061">
    <property type="protein sequence ID" value="ABC65696.1"/>
    <property type="molecule type" value="Genomic_DNA"/>
</dbReference>
<dbReference type="RefSeq" id="WP_011412858.1">
    <property type="nucleotide sequence ID" value="NC_007716.1"/>
</dbReference>
<dbReference type="SMR" id="Q2NIP7"/>
<dbReference type="STRING" id="322098.AYWB_579"/>
<dbReference type="KEGG" id="ayw:AYWB_579"/>
<dbReference type="eggNOG" id="COG0215">
    <property type="taxonomic scope" value="Bacteria"/>
</dbReference>
<dbReference type="HOGENOM" id="CLU_013528_0_0_14"/>
<dbReference type="OrthoDB" id="9815130at2"/>
<dbReference type="PhylomeDB" id="Q2NIP7"/>
<dbReference type="Proteomes" id="UP000001934">
    <property type="component" value="Chromosome"/>
</dbReference>
<dbReference type="GO" id="GO:0005829">
    <property type="term" value="C:cytosol"/>
    <property type="evidence" value="ECO:0007669"/>
    <property type="project" value="TreeGrafter"/>
</dbReference>
<dbReference type="GO" id="GO:0005524">
    <property type="term" value="F:ATP binding"/>
    <property type="evidence" value="ECO:0007669"/>
    <property type="project" value="UniProtKB-UniRule"/>
</dbReference>
<dbReference type="GO" id="GO:0004817">
    <property type="term" value="F:cysteine-tRNA ligase activity"/>
    <property type="evidence" value="ECO:0007669"/>
    <property type="project" value="UniProtKB-UniRule"/>
</dbReference>
<dbReference type="GO" id="GO:0008270">
    <property type="term" value="F:zinc ion binding"/>
    <property type="evidence" value="ECO:0007669"/>
    <property type="project" value="UniProtKB-UniRule"/>
</dbReference>
<dbReference type="GO" id="GO:0006423">
    <property type="term" value="P:cysteinyl-tRNA aminoacylation"/>
    <property type="evidence" value="ECO:0007669"/>
    <property type="project" value="UniProtKB-UniRule"/>
</dbReference>
<dbReference type="CDD" id="cd00672">
    <property type="entry name" value="CysRS_core"/>
    <property type="match status" value="1"/>
</dbReference>
<dbReference type="Gene3D" id="1.20.120.1910">
    <property type="entry name" value="Cysteine-tRNA ligase, C-terminal anti-codon recognition domain"/>
    <property type="match status" value="1"/>
</dbReference>
<dbReference type="Gene3D" id="3.40.50.620">
    <property type="entry name" value="HUPs"/>
    <property type="match status" value="1"/>
</dbReference>
<dbReference type="HAMAP" id="MF_00041">
    <property type="entry name" value="Cys_tRNA_synth"/>
    <property type="match status" value="1"/>
</dbReference>
<dbReference type="InterPro" id="IPR015803">
    <property type="entry name" value="Cys-tRNA-ligase"/>
</dbReference>
<dbReference type="InterPro" id="IPR024909">
    <property type="entry name" value="Cys-tRNA/MSH_ligase"/>
</dbReference>
<dbReference type="InterPro" id="IPR014729">
    <property type="entry name" value="Rossmann-like_a/b/a_fold"/>
</dbReference>
<dbReference type="InterPro" id="IPR032678">
    <property type="entry name" value="tRNA-synt_1_cat_dom"/>
</dbReference>
<dbReference type="InterPro" id="IPR009080">
    <property type="entry name" value="tRNAsynth_Ia_anticodon-bd"/>
</dbReference>
<dbReference type="NCBIfam" id="TIGR00435">
    <property type="entry name" value="cysS"/>
    <property type="match status" value="1"/>
</dbReference>
<dbReference type="PANTHER" id="PTHR10890:SF3">
    <property type="entry name" value="CYSTEINE--TRNA LIGASE, CYTOPLASMIC"/>
    <property type="match status" value="1"/>
</dbReference>
<dbReference type="PANTHER" id="PTHR10890">
    <property type="entry name" value="CYSTEINYL-TRNA SYNTHETASE"/>
    <property type="match status" value="1"/>
</dbReference>
<dbReference type="Pfam" id="PF01406">
    <property type="entry name" value="tRNA-synt_1e"/>
    <property type="match status" value="1"/>
</dbReference>
<dbReference type="PRINTS" id="PR00983">
    <property type="entry name" value="TRNASYNTHCYS"/>
</dbReference>
<dbReference type="SUPFAM" id="SSF47323">
    <property type="entry name" value="Anticodon-binding domain of a subclass of class I aminoacyl-tRNA synthetases"/>
    <property type="match status" value="1"/>
</dbReference>
<dbReference type="SUPFAM" id="SSF52374">
    <property type="entry name" value="Nucleotidylyl transferase"/>
    <property type="match status" value="1"/>
</dbReference>
<protein>
    <recommendedName>
        <fullName evidence="1">Cysteine--tRNA ligase</fullName>
        <ecNumber evidence="1">6.1.1.16</ecNumber>
    </recommendedName>
    <alternativeName>
        <fullName evidence="1">Cysteinyl-tRNA synthetase</fullName>
        <shortName evidence="1">CysRS</shortName>
    </alternativeName>
</protein>
<name>SYC_AYWBP</name>
<proteinExistence type="inferred from homology"/>
<gene>
    <name evidence="1" type="primary">cysS</name>
    <name type="ordered locus">AYWB_579</name>
</gene>
<organism>
    <name type="scientific">Aster yellows witches'-broom phytoplasma (strain AYWB)</name>
    <dbReference type="NCBI Taxonomy" id="322098"/>
    <lineage>
        <taxon>Bacteria</taxon>
        <taxon>Bacillati</taxon>
        <taxon>Mycoplasmatota</taxon>
        <taxon>Mollicutes</taxon>
        <taxon>Acholeplasmatales</taxon>
        <taxon>Acholeplasmataceae</taxon>
        <taxon>Candidatus Phytoplasma</taxon>
        <taxon>16SrI (Aster yellows group)</taxon>
    </lineage>
</organism>
<accession>Q2NIP7</accession>
<reference key="1">
    <citation type="journal article" date="2006" name="J. Bacteriol.">
        <title>Living with genome instability: the adaptation of phytoplasmas to diverse environments of their insect and plant hosts.</title>
        <authorList>
            <person name="Bai X."/>
            <person name="Zhang J."/>
            <person name="Ewing A."/>
            <person name="Miller S.A."/>
            <person name="Jancso Radek A."/>
            <person name="Shevchenko D.V."/>
            <person name="Tsukerman K."/>
            <person name="Walunas T."/>
            <person name="Lapidus A."/>
            <person name="Campbell J.W."/>
            <person name="Hogenhout S.A."/>
        </authorList>
    </citation>
    <scope>NUCLEOTIDE SEQUENCE [LARGE SCALE GENOMIC DNA]</scope>
    <source>
        <strain>AYWB</strain>
    </source>
</reference>
<keyword id="KW-0030">Aminoacyl-tRNA synthetase</keyword>
<keyword id="KW-0067">ATP-binding</keyword>
<keyword id="KW-0963">Cytoplasm</keyword>
<keyword id="KW-0436">Ligase</keyword>
<keyword id="KW-0479">Metal-binding</keyword>
<keyword id="KW-0547">Nucleotide-binding</keyword>
<keyword id="KW-0648">Protein biosynthesis</keyword>
<keyword id="KW-0862">Zinc</keyword>